<name>RL35_XANCP</name>
<organism>
    <name type="scientific">Xanthomonas campestris pv. campestris (strain ATCC 33913 / DSM 3586 / NCPPB 528 / LMG 568 / P 25)</name>
    <dbReference type="NCBI Taxonomy" id="190485"/>
    <lineage>
        <taxon>Bacteria</taxon>
        <taxon>Pseudomonadati</taxon>
        <taxon>Pseudomonadota</taxon>
        <taxon>Gammaproteobacteria</taxon>
        <taxon>Lysobacterales</taxon>
        <taxon>Lysobacteraceae</taxon>
        <taxon>Xanthomonas</taxon>
    </lineage>
</organism>
<reference key="1">
    <citation type="journal article" date="2002" name="Nature">
        <title>Comparison of the genomes of two Xanthomonas pathogens with differing host specificities.</title>
        <authorList>
            <person name="da Silva A.C.R."/>
            <person name="Ferro J.A."/>
            <person name="Reinach F.C."/>
            <person name="Farah C.S."/>
            <person name="Furlan L.R."/>
            <person name="Quaggio R.B."/>
            <person name="Monteiro-Vitorello C.B."/>
            <person name="Van Sluys M.A."/>
            <person name="Almeida N.F. Jr."/>
            <person name="Alves L.M.C."/>
            <person name="do Amaral A.M."/>
            <person name="Bertolini M.C."/>
            <person name="Camargo L.E.A."/>
            <person name="Camarotte G."/>
            <person name="Cannavan F."/>
            <person name="Cardozo J."/>
            <person name="Chambergo F."/>
            <person name="Ciapina L.P."/>
            <person name="Cicarelli R.M.B."/>
            <person name="Coutinho L.L."/>
            <person name="Cursino-Santos J.R."/>
            <person name="El-Dorry H."/>
            <person name="Faria J.B."/>
            <person name="Ferreira A.J.S."/>
            <person name="Ferreira R.C.C."/>
            <person name="Ferro M.I.T."/>
            <person name="Formighieri E.F."/>
            <person name="Franco M.C."/>
            <person name="Greggio C.C."/>
            <person name="Gruber A."/>
            <person name="Katsuyama A.M."/>
            <person name="Kishi L.T."/>
            <person name="Leite R.P."/>
            <person name="Lemos E.G.M."/>
            <person name="Lemos M.V.F."/>
            <person name="Locali E.C."/>
            <person name="Machado M.A."/>
            <person name="Madeira A.M.B.N."/>
            <person name="Martinez-Rossi N.M."/>
            <person name="Martins E.C."/>
            <person name="Meidanis J."/>
            <person name="Menck C.F.M."/>
            <person name="Miyaki C.Y."/>
            <person name="Moon D.H."/>
            <person name="Moreira L.M."/>
            <person name="Novo M.T.M."/>
            <person name="Okura V.K."/>
            <person name="Oliveira M.C."/>
            <person name="Oliveira V.R."/>
            <person name="Pereira H.A."/>
            <person name="Rossi A."/>
            <person name="Sena J.A.D."/>
            <person name="Silva C."/>
            <person name="de Souza R.F."/>
            <person name="Spinola L.A.F."/>
            <person name="Takita M.A."/>
            <person name="Tamura R.E."/>
            <person name="Teixeira E.C."/>
            <person name="Tezza R.I.D."/>
            <person name="Trindade dos Santos M."/>
            <person name="Truffi D."/>
            <person name="Tsai S.M."/>
            <person name="White F.F."/>
            <person name="Setubal J.C."/>
            <person name="Kitajima J.P."/>
        </authorList>
    </citation>
    <scope>NUCLEOTIDE SEQUENCE [LARGE SCALE GENOMIC DNA]</scope>
    <source>
        <strain>ATCC 33913 / DSM 3586 / NCPPB 528 / LMG 568 / P 25</strain>
    </source>
</reference>
<evidence type="ECO:0000255" key="1">
    <source>
        <dbReference type="HAMAP-Rule" id="MF_00514"/>
    </source>
</evidence>
<evidence type="ECO:0000305" key="2"/>
<dbReference type="EMBL" id="AE008922">
    <property type="protein sequence ID" value="AAM41737.1"/>
    <property type="molecule type" value="Genomic_DNA"/>
</dbReference>
<dbReference type="RefSeq" id="NP_637813.1">
    <property type="nucleotide sequence ID" value="NC_003902.1"/>
</dbReference>
<dbReference type="RefSeq" id="WP_002811096.1">
    <property type="nucleotide sequence ID" value="NC_003902.1"/>
</dbReference>
<dbReference type="SMR" id="P66283"/>
<dbReference type="STRING" id="190485.XCC2461"/>
<dbReference type="EnsemblBacteria" id="AAM41737">
    <property type="protein sequence ID" value="AAM41737"/>
    <property type="gene ID" value="XCC2461"/>
</dbReference>
<dbReference type="GeneID" id="98193709"/>
<dbReference type="KEGG" id="xcc:XCC2461"/>
<dbReference type="PATRIC" id="fig|190485.4.peg.2624"/>
<dbReference type="eggNOG" id="COG0291">
    <property type="taxonomic scope" value="Bacteria"/>
</dbReference>
<dbReference type="HOGENOM" id="CLU_169643_4_3_6"/>
<dbReference type="OrthoDB" id="47476at2"/>
<dbReference type="PRO" id="PR:P66283"/>
<dbReference type="Proteomes" id="UP000001010">
    <property type="component" value="Chromosome"/>
</dbReference>
<dbReference type="GO" id="GO:0022625">
    <property type="term" value="C:cytosolic large ribosomal subunit"/>
    <property type="evidence" value="ECO:0000318"/>
    <property type="project" value="GO_Central"/>
</dbReference>
<dbReference type="GO" id="GO:0003735">
    <property type="term" value="F:structural constituent of ribosome"/>
    <property type="evidence" value="ECO:0000318"/>
    <property type="project" value="GO_Central"/>
</dbReference>
<dbReference type="GO" id="GO:0006412">
    <property type="term" value="P:translation"/>
    <property type="evidence" value="ECO:0007669"/>
    <property type="project" value="UniProtKB-UniRule"/>
</dbReference>
<dbReference type="FunFam" id="4.10.410.60:FF:000001">
    <property type="entry name" value="50S ribosomal protein L35"/>
    <property type="match status" value="1"/>
</dbReference>
<dbReference type="Gene3D" id="4.10.410.60">
    <property type="match status" value="1"/>
</dbReference>
<dbReference type="HAMAP" id="MF_00514">
    <property type="entry name" value="Ribosomal_bL35"/>
    <property type="match status" value="1"/>
</dbReference>
<dbReference type="InterPro" id="IPR001706">
    <property type="entry name" value="Ribosomal_bL35"/>
</dbReference>
<dbReference type="InterPro" id="IPR021137">
    <property type="entry name" value="Ribosomal_bL35-like"/>
</dbReference>
<dbReference type="InterPro" id="IPR018265">
    <property type="entry name" value="Ribosomal_bL35_CS"/>
</dbReference>
<dbReference type="InterPro" id="IPR037229">
    <property type="entry name" value="Ribosomal_bL35_sf"/>
</dbReference>
<dbReference type="NCBIfam" id="TIGR00001">
    <property type="entry name" value="rpmI_bact"/>
    <property type="match status" value="1"/>
</dbReference>
<dbReference type="PANTHER" id="PTHR33343">
    <property type="entry name" value="54S RIBOSOMAL PROTEIN BL35M"/>
    <property type="match status" value="1"/>
</dbReference>
<dbReference type="PANTHER" id="PTHR33343:SF1">
    <property type="entry name" value="LARGE RIBOSOMAL SUBUNIT PROTEIN BL35M"/>
    <property type="match status" value="1"/>
</dbReference>
<dbReference type="Pfam" id="PF01632">
    <property type="entry name" value="Ribosomal_L35p"/>
    <property type="match status" value="1"/>
</dbReference>
<dbReference type="PRINTS" id="PR00064">
    <property type="entry name" value="RIBOSOMALL35"/>
</dbReference>
<dbReference type="SUPFAM" id="SSF143034">
    <property type="entry name" value="L35p-like"/>
    <property type="match status" value="1"/>
</dbReference>
<dbReference type="PROSITE" id="PS00936">
    <property type="entry name" value="RIBOSOMAL_L35"/>
    <property type="match status" value="1"/>
</dbReference>
<accession>P66283</accession>
<accession>Q8NKX4</accession>
<proteinExistence type="inferred from homology"/>
<keyword id="KW-1185">Reference proteome</keyword>
<keyword id="KW-0687">Ribonucleoprotein</keyword>
<keyword id="KW-0689">Ribosomal protein</keyword>
<sequence length="65" mass="7561">MPKIKTNRAAAKRFRKTASGKYKCGHANRSHILTKKATKRKRNLRQTNHVRAEDAGRLDRMLPYL</sequence>
<gene>
    <name evidence="1" type="primary">rpmI</name>
    <name type="ordered locus">XCC2461</name>
</gene>
<comment type="similarity">
    <text evidence="1">Belongs to the bacterial ribosomal protein bL35 family.</text>
</comment>
<protein>
    <recommendedName>
        <fullName evidence="1">Large ribosomal subunit protein bL35</fullName>
    </recommendedName>
    <alternativeName>
        <fullName evidence="2">50S ribosomal protein L35</fullName>
    </alternativeName>
</protein>
<feature type="chain" id="PRO_0000177460" description="Large ribosomal subunit protein bL35">
    <location>
        <begin position="1"/>
        <end position="65"/>
    </location>
</feature>